<reference key="1">
    <citation type="journal article" date="1999" name="Nature">
        <title>Sequence and analysis of chromosome 4 of the plant Arabidopsis thaliana.</title>
        <authorList>
            <person name="Mayer K.F.X."/>
            <person name="Schueller C."/>
            <person name="Wambutt R."/>
            <person name="Murphy G."/>
            <person name="Volckaert G."/>
            <person name="Pohl T."/>
            <person name="Duesterhoeft A."/>
            <person name="Stiekema W."/>
            <person name="Entian K.-D."/>
            <person name="Terryn N."/>
            <person name="Harris B."/>
            <person name="Ansorge W."/>
            <person name="Brandt P."/>
            <person name="Grivell L.A."/>
            <person name="Rieger M."/>
            <person name="Weichselgartner M."/>
            <person name="de Simone V."/>
            <person name="Obermaier B."/>
            <person name="Mache R."/>
            <person name="Mueller M."/>
            <person name="Kreis M."/>
            <person name="Delseny M."/>
            <person name="Puigdomenech P."/>
            <person name="Watson M."/>
            <person name="Schmidtheini T."/>
            <person name="Reichert B."/>
            <person name="Portetelle D."/>
            <person name="Perez-Alonso M."/>
            <person name="Boutry M."/>
            <person name="Bancroft I."/>
            <person name="Vos P."/>
            <person name="Hoheisel J."/>
            <person name="Zimmermann W."/>
            <person name="Wedler H."/>
            <person name="Ridley P."/>
            <person name="Langham S.-A."/>
            <person name="McCullagh B."/>
            <person name="Bilham L."/>
            <person name="Robben J."/>
            <person name="van der Schueren J."/>
            <person name="Grymonprez B."/>
            <person name="Chuang Y.-J."/>
            <person name="Vandenbussche F."/>
            <person name="Braeken M."/>
            <person name="Weltjens I."/>
            <person name="Voet M."/>
            <person name="Bastiaens I."/>
            <person name="Aert R."/>
            <person name="Defoor E."/>
            <person name="Weitzenegger T."/>
            <person name="Bothe G."/>
            <person name="Ramsperger U."/>
            <person name="Hilbert H."/>
            <person name="Braun M."/>
            <person name="Holzer E."/>
            <person name="Brandt A."/>
            <person name="Peters S."/>
            <person name="van Staveren M."/>
            <person name="Dirkse W."/>
            <person name="Mooijman P."/>
            <person name="Klein Lankhorst R."/>
            <person name="Rose M."/>
            <person name="Hauf J."/>
            <person name="Koetter P."/>
            <person name="Berneiser S."/>
            <person name="Hempel S."/>
            <person name="Feldpausch M."/>
            <person name="Lamberth S."/>
            <person name="Van den Daele H."/>
            <person name="De Keyser A."/>
            <person name="Buysshaert C."/>
            <person name="Gielen J."/>
            <person name="Villarroel R."/>
            <person name="De Clercq R."/>
            <person name="van Montagu M."/>
            <person name="Rogers J."/>
            <person name="Cronin A."/>
            <person name="Quail M.A."/>
            <person name="Bray-Allen S."/>
            <person name="Clark L."/>
            <person name="Doggett J."/>
            <person name="Hall S."/>
            <person name="Kay M."/>
            <person name="Lennard N."/>
            <person name="McLay K."/>
            <person name="Mayes R."/>
            <person name="Pettett A."/>
            <person name="Rajandream M.A."/>
            <person name="Lyne M."/>
            <person name="Benes V."/>
            <person name="Rechmann S."/>
            <person name="Borkova D."/>
            <person name="Bloecker H."/>
            <person name="Scharfe M."/>
            <person name="Grimm M."/>
            <person name="Loehnert T.-H."/>
            <person name="Dose S."/>
            <person name="de Haan M."/>
            <person name="Maarse A.C."/>
            <person name="Schaefer M."/>
            <person name="Mueller-Auer S."/>
            <person name="Gabel C."/>
            <person name="Fuchs M."/>
            <person name="Fartmann B."/>
            <person name="Granderath K."/>
            <person name="Dauner D."/>
            <person name="Herzl A."/>
            <person name="Neumann S."/>
            <person name="Argiriou A."/>
            <person name="Vitale D."/>
            <person name="Liguori R."/>
            <person name="Piravandi E."/>
            <person name="Massenet O."/>
            <person name="Quigley F."/>
            <person name="Clabauld G."/>
            <person name="Muendlein A."/>
            <person name="Felber R."/>
            <person name="Schnabl S."/>
            <person name="Hiller R."/>
            <person name="Schmidt W."/>
            <person name="Lecharny A."/>
            <person name="Aubourg S."/>
            <person name="Chefdor F."/>
            <person name="Cooke R."/>
            <person name="Berger C."/>
            <person name="Monfort A."/>
            <person name="Casacuberta E."/>
            <person name="Gibbons T."/>
            <person name="Weber N."/>
            <person name="Vandenbol M."/>
            <person name="Bargues M."/>
            <person name="Terol J."/>
            <person name="Torres A."/>
            <person name="Perez-Perez A."/>
            <person name="Purnelle B."/>
            <person name="Bent E."/>
            <person name="Johnson S."/>
            <person name="Tacon D."/>
            <person name="Jesse T."/>
            <person name="Heijnen L."/>
            <person name="Schwarz S."/>
            <person name="Scholler P."/>
            <person name="Heber S."/>
            <person name="Francs P."/>
            <person name="Bielke C."/>
            <person name="Frishman D."/>
            <person name="Haase D."/>
            <person name="Lemcke K."/>
            <person name="Mewes H.-W."/>
            <person name="Stocker S."/>
            <person name="Zaccaria P."/>
            <person name="Bevan M."/>
            <person name="Wilson R.K."/>
            <person name="de la Bastide M."/>
            <person name="Habermann K."/>
            <person name="Parnell L."/>
            <person name="Dedhia N."/>
            <person name="Gnoj L."/>
            <person name="Schutz K."/>
            <person name="Huang E."/>
            <person name="Spiegel L."/>
            <person name="Sekhon M."/>
            <person name="Murray J."/>
            <person name="Sheet P."/>
            <person name="Cordes M."/>
            <person name="Abu-Threideh J."/>
            <person name="Stoneking T."/>
            <person name="Kalicki J."/>
            <person name="Graves T."/>
            <person name="Harmon G."/>
            <person name="Edwards J."/>
            <person name="Latreille P."/>
            <person name="Courtney L."/>
            <person name="Cloud J."/>
            <person name="Abbott A."/>
            <person name="Scott K."/>
            <person name="Johnson D."/>
            <person name="Minx P."/>
            <person name="Bentley D."/>
            <person name="Fulton B."/>
            <person name="Miller N."/>
            <person name="Greco T."/>
            <person name="Kemp K."/>
            <person name="Kramer J."/>
            <person name="Fulton L."/>
            <person name="Mardis E."/>
            <person name="Dante M."/>
            <person name="Pepin K."/>
            <person name="Hillier L.W."/>
            <person name="Nelson J."/>
            <person name="Spieth J."/>
            <person name="Ryan E."/>
            <person name="Andrews S."/>
            <person name="Geisel C."/>
            <person name="Layman D."/>
            <person name="Du H."/>
            <person name="Ali J."/>
            <person name="Berghoff A."/>
            <person name="Jones K."/>
            <person name="Drone K."/>
            <person name="Cotton M."/>
            <person name="Joshu C."/>
            <person name="Antonoiu B."/>
            <person name="Zidanic M."/>
            <person name="Strong C."/>
            <person name="Sun H."/>
            <person name="Lamar B."/>
            <person name="Yordan C."/>
            <person name="Ma P."/>
            <person name="Zhong J."/>
            <person name="Preston R."/>
            <person name="Vil D."/>
            <person name="Shekher M."/>
            <person name="Matero A."/>
            <person name="Shah R."/>
            <person name="Swaby I.K."/>
            <person name="O'Shaughnessy A."/>
            <person name="Rodriguez M."/>
            <person name="Hoffman J."/>
            <person name="Till S."/>
            <person name="Granat S."/>
            <person name="Shohdy N."/>
            <person name="Hasegawa A."/>
            <person name="Hameed A."/>
            <person name="Lodhi M."/>
            <person name="Johnson A."/>
            <person name="Chen E."/>
            <person name="Marra M.A."/>
            <person name="Martienssen R."/>
            <person name="McCombie W.R."/>
        </authorList>
    </citation>
    <scope>NUCLEOTIDE SEQUENCE [LARGE SCALE GENOMIC DNA]</scope>
    <source>
        <strain>cv. Columbia</strain>
    </source>
</reference>
<reference key="2">
    <citation type="journal article" date="2017" name="Plant J.">
        <title>Araport11: a complete reannotation of the Arabidopsis thaliana reference genome.</title>
        <authorList>
            <person name="Cheng C.Y."/>
            <person name="Krishnakumar V."/>
            <person name="Chan A.P."/>
            <person name="Thibaud-Nissen F."/>
            <person name="Schobel S."/>
            <person name="Town C.D."/>
        </authorList>
    </citation>
    <scope>GENOME REANNOTATION</scope>
    <source>
        <strain>cv. Columbia</strain>
    </source>
</reference>
<dbReference type="EC" id="3.6.1.-" evidence="1"/>
<dbReference type="EMBL" id="AL109796">
    <property type="protein sequence ID" value="CAB52469.1"/>
    <property type="status" value="ALT_INIT"/>
    <property type="molecule type" value="Genomic_DNA"/>
</dbReference>
<dbReference type="EMBL" id="AL161576">
    <property type="protein sequence ID" value="CAB81018.1"/>
    <property type="status" value="ALT_INIT"/>
    <property type="molecule type" value="Genomic_DNA"/>
</dbReference>
<dbReference type="EMBL" id="CP002687">
    <property type="protein sequence ID" value="AEE85743.1"/>
    <property type="molecule type" value="Genomic_DNA"/>
</dbReference>
<dbReference type="PIR" id="T14085">
    <property type="entry name" value="T14085"/>
</dbReference>
<dbReference type="RefSeq" id="NP_194754.2">
    <property type="nucleotide sequence ID" value="NM_119171.3"/>
</dbReference>
<dbReference type="SMR" id="F4JPK8"/>
<dbReference type="FunCoup" id="F4JPK8">
    <property type="interactions" value="1452"/>
</dbReference>
<dbReference type="STRING" id="3702.F4JPK8"/>
<dbReference type="iPTMnet" id="F4JPK8"/>
<dbReference type="PaxDb" id="3702-AT4G30250.1"/>
<dbReference type="ProteomicsDB" id="244509"/>
<dbReference type="EnsemblPlants" id="AT4G30250.1">
    <property type="protein sequence ID" value="AT4G30250.1"/>
    <property type="gene ID" value="AT4G30250"/>
</dbReference>
<dbReference type="GeneID" id="829148"/>
<dbReference type="Gramene" id="AT4G30250.1">
    <property type="protein sequence ID" value="AT4G30250.1"/>
    <property type="gene ID" value="AT4G30250"/>
</dbReference>
<dbReference type="KEGG" id="ath:AT4G30250"/>
<dbReference type="Araport" id="AT4G30250"/>
<dbReference type="TAIR" id="AT4G30250"/>
<dbReference type="eggNOG" id="KOG0743">
    <property type="taxonomic scope" value="Eukaryota"/>
</dbReference>
<dbReference type="HOGENOM" id="CLU_010189_0_1_1"/>
<dbReference type="InParanoid" id="F4JPK8"/>
<dbReference type="PRO" id="PR:F4JPK8"/>
<dbReference type="Proteomes" id="UP000006548">
    <property type="component" value="Chromosome 4"/>
</dbReference>
<dbReference type="ExpressionAtlas" id="F4JPK8">
    <property type="expression patterns" value="baseline and differential"/>
</dbReference>
<dbReference type="GO" id="GO:0005524">
    <property type="term" value="F:ATP binding"/>
    <property type="evidence" value="ECO:0007669"/>
    <property type="project" value="UniProtKB-KW"/>
</dbReference>
<dbReference type="GO" id="GO:0016887">
    <property type="term" value="F:ATP hydrolysis activity"/>
    <property type="evidence" value="ECO:0007669"/>
    <property type="project" value="InterPro"/>
</dbReference>
<dbReference type="GO" id="GO:0006950">
    <property type="term" value="P:response to stress"/>
    <property type="evidence" value="ECO:0007669"/>
    <property type="project" value="UniProtKB-ARBA"/>
</dbReference>
<dbReference type="CDD" id="cd19510">
    <property type="entry name" value="RecA-like_BCS1"/>
    <property type="match status" value="1"/>
</dbReference>
<dbReference type="Gene3D" id="6.10.280.40">
    <property type="match status" value="1"/>
</dbReference>
<dbReference type="Gene3D" id="3.40.50.300">
    <property type="entry name" value="P-loop containing nucleotide triphosphate hydrolases"/>
    <property type="match status" value="1"/>
</dbReference>
<dbReference type="InterPro" id="IPR003593">
    <property type="entry name" value="AAA+_ATPase"/>
</dbReference>
<dbReference type="InterPro" id="IPR025753">
    <property type="entry name" value="AAA_N_dom"/>
</dbReference>
<dbReference type="InterPro" id="IPR003959">
    <property type="entry name" value="ATPase_AAA_core"/>
</dbReference>
<dbReference type="InterPro" id="IPR050747">
    <property type="entry name" value="Mitochondrial_chaperone_BCS1"/>
</dbReference>
<dbReference type="InterPro" id="IPR027417">
    <property type="entry name" value="P-loop_NTPase"/>
</dbReference>
<dbReference type="PANTHER" id="PTHR23070">
    <property type="entry name" value="BCS1 AAA-TYPE ATPASE"/>
    <property type="match status" value="1"/>
</dbReference>
<dbReference type="Pfam" id="PF00004">
    <property type="entry name" value="AAA"/>
    <property type="match status" value="1"/>
</dbReference>
<dbReference type="Pfam" id="PF14363">
    <property type="entry name" value="AAA_assoc"/>
    <property type="match status" value="1"/>
</dbReference>
<dbReference type="SMART" id="SM00382">
    <property type="entry name" value="AAA"/>
    <property type="match status" value="1"/>
</dbReference>
<dbReference type="SUPFAM" id="SSF52540">
    <property type="entry name" value="P-loop containing nucleoside triphosphate hydrolases"/>
    <property type="match status" value="1"/>
</dbReference>
<proteinExistence type="inferred from homology"/>
<protein>
    <recommendedName>
        <fullName>AAA-ATPase At4g30250</fullName>
        <ecNumber evidence="1">3.6.1.-</ecNumber>
    </recommendedName>
</protein>
<gene>
    <name evidence="5" type="ordered locus">At4g30250</name>
    <name evidence="6" type="ORF">F9N11.100</name>
</gene>
<accession>F4JPK8</accession>
<accession>Q9SUL9</accession>
<sequence length="519" mass="59511">MSDYWTTMASLLGMLAFCQTIVQLVFPPELRLAFLHFLTRIRHVFSSHIYFDITEIDGVNTNELYNAVQLYLSSSVTVNDAVSSSNNNTRLSLTRVPNSSSVTFGLSNNDRITDVFNGVTILWEHVVVQRQVQSFSWRPMPEEKRGFTLQINKRDKALVLDSYLDYIVGKSEEIRRRNEERLLYTNSRGVSLDARSHPWDSVRFKHPSTFDTLAMDPEKKKRIMEDLREFANGQGFYQKTGRAWKRGYLLYGPPGTGKSSLIAAMANYLGYDIYDLELTEVQNNSELRKLLMKTSSKSIIVIEDIDCSISLTKRGKNKKKNGSYEYDPGLTNGSGLEEPGSSVTLSGLLNFTDGLWSCCGSEKIFVFTTNHIEKLDSALMRSGRMDMHVHMGFCKFPALKILLKNYLRLEEEDMDSVVLKEMEECVEEAEITPADVSEVLIRNRSDAEKAVREIVSVLKERVVKRRKSVGLKKKKQEGQEEEEEAEEEQEKRALDSPNRRNREVCGFREEEEEEDEKEK</sequence>
<evidence type="ECO:0000250" key="1">
    <source>
        <dbReference type="UniProtKB" id="Q9FLD5"/>
    </source>
</evidence>
<evidence type="ECO:0000255" key="2"/>
<evidence type="ECO:0000256" key="3">
    <source>
        <dbReference type="SAM" id="MobiDB-lite"/>
    </source>
</evidence>
<evidence type="ECO:0000305" key="4"/>
<evidence type="ECO:0000312" key="5">
    <source>
        <dbReference type="EMBL" id="AEE85743.1"/>
    </source>
</evidence>
<evidence type="ECO:0000312" key="6">
    <source>
        <dbReference type="EMBL" id="CAB52469.1"/>
    </source>
</evidence>
<evidence type="ECO:0000312" key="7">
    <source>
        <dbReference type="Proteomes" id="UP000006548"/>
    </source>
</evidence>
<name>AATPE_ARATH</name>
<comment type="catalytic activity">
    <reaction evidence="1">
        <text>ATP + H2O = ADP + phosphate + H(+)</text>
        <dbReference type="Rhea" id="RHEA:13065"/>
        <dbReference type="ChEBI" id="CHEBI:15377"/>
        <dbReference type="ChEBI" id="CHEBI:15378"/>
        <dbReference type="ChEBI" id="CHEBI:30616"/>
        <dbReference type="ChEBI" id="CHEBI:43474"/>
        <dbReference type="ChEBI" id="CHEBI:456216"/>
    </reaction>
</comment>
<comment type="cofactor">
    <cofactor evidence="1">
        <name>Mg(2+)</name>
        <dbReference type="ChEBI" id="CHEBI:18420"/>
    </cofactor>
</comment>
<comment type="similarity">
    <text evidence="4">Belongs to the AAA ATPase family. BCS1 subfamily.</text>
</comment>
<comment type="sequence caution" evidence="4">
    <conflict type="erroneous initiation">
        <sequence resource="EMBL-CDS" id="CAB52469"/>
    </conflict>
    <text>Truncated N-terminus.</text>
</comment>
<comment type="sequence caution" evidence="4">
    <conflict type="erroneous initiation">
        <sequence resource="EMBL-CDS" id="CAB81018"/>
    </conflict>
    <text>Truncated N-terminus.</text>
</comment>
<organism evidence="7">
    <name type="scientific">Arabidopsis thaliana</name>
    <name type="common">Mouse-ear cress</name>
    <dbReference type="NCBI Taxonomy" id="3702"/>
    <lineage>
        <taxon>Eukaryota</taxon>
        <taxon>Viridiplantae</taxon>
        <taxon>Streptophyta</taxon>
        <taxon>Embryophyta</taxon>
        <taxon>Tracheophyta</taxon>
        <taxon>Spermatophyta</taxon>
        <taxon>Magnoliopsida</taxon>
        <taxon>eudicotyledons</taxon>
        <taxon>Gunneridae</taxon>
        <taxon>Pentapetalae</taxon>
        <taxon>rosids</taxon>
        <taxon>malvids</taxon>
        <taxon>Brassicales</taxon>
        <taxon>Brassicaceae</taxon>
        <taxon>Camelineae</taxon>
        <taxon>Arabidopsis</taxon>
    </lineage>
</organism>
<keyword id="KW-0067">ATP-binding</keyword>
<keyword id="KW-0378">Hydrolase</keyword>
<keyword id="KW-0460">Magnesium</keyword>
<keyword id="KW-0547">Nucleotide-binding</keyword>
<keyword id="KW-1185">Reference proteome</keyword>
<keyword id="KW-0732">Signal</keyword>
<feature type="signal peptide" evidence="2">
    <location>
        <begin position="1"/>
        <end position="24"/>
    </location>
</feature>
<feature type="chain" id="PRO_0000434716" description="AAA-ATPase At4g30250" evidence="2">
    <location>
        <begin position="25"/>
        <end position="519"/>
    </location>
</feature>
<feature type="region of interest" description="Disordered" evidence="3">
    <location>
        <begin position="315"/>
        <end position="335"/>
    </location>
</feature>
<feature type="region of interest" description="Disordered" evidence="3">
    <location>
        <begin position="467"/>
        <end position="519"/>
    </location>
</feature>
<feature type="compositionally biased region" description="Acidic residues" evidence="3">
    <location>
        <begin position="479"/>
        <end position="488"/>
    </location>
</feature>
<feature type="compositionally biased region" description="Basic and acidic residues" evidence="3">
    <location>
        <begin position="489"/>
        <end position="508"/>
    </location>
</feature>
<feature type="compositionally biased region" description="Acidic residues" evidence="3">
    <location>
        <begin position="509"/>
        <end position="519"/>
    </location>
</feature>
<feature type="binding site" evidence="2">
    <location>
        <begin position="252"/>
        <end position="259"/>
    </location>
    <ligand>
        <name>ATP</name>
        <dbReference type="ChEBI" id="CHEBI:30616"/>
    </ligand>
</feature>